<accession>B1X0Z7</accession>
<sequence>MKFRSLIKKTSNWLTATPERSLDNAYKAALKIKEIEDNHFGGKKVSKENADYGDSVISYFKTEVNGYLQKINMGLGVFKTSRLFLNISNIQELPQERPTERELQKNATTAAIIFEKLEFIDQVASKYQSRDTQEVYNGSLVLAKESSQDKETQTLDNKSTNQTNSKLSNNNKISSGQNDSRLESASQKTGVLPRSFINTLNKIKQEIDPKSGESEEQVLNKYRKSRLRTALSIKFILLLIIVPLLTHQLTKTFLLTPIIHQYFQNHEQVVFINKDLEEEAFEELSHYEEILRFQGLIGLREPLTDEEVEEKVQEKAREITEEYRAQGIDSIGNVFADLFSVTAFAIVIVSSRKEIEVLKSFLDEILYGLSDPAKAFLIILFTDMFVGFHSPHGWEVILEGVARHFGLPENQEFNFLFIATFPVILDTVLKYWIFRYLNRISPSAVATYKNMNE</sequence>
<reference key="1">
    <citation type="journal article" date="2008" name="Proc. Natl. Acad. Sci. U.S.A.">
        <title>The genome of Cyanothece 51142, a unicellular diazotrophic cyanobacterium important in the marine nitrogen cycle.</title>
        <authorList>
            <person name="Welsh E.A."/>
            <person name="Liberton M."/>
            <person name="Stoeckel J."/>
            <person name="Loh T."/>
            <person name="Elvitigala T."/>
            <person name="Wang C."/>
            <person name="Wollam A."/>
            <person name="Fulton R.S."/>
            <person name="Clifton S.W."/>
            <person name="Jacobs J.M."/>
            <person name="Aurora R."/>
            <person name="Ghosh B.K."/>
            <person name="Sherman L.A."/>
            <person name="Smith R.D."/>
            <person name="Wilson R.K."/>
            <person name="Pakrasi H.B."/>
        </authorList>
    </citation>
    <scope>NUCLEOTIDE SEQUENCE [LARGE SCALE GENOMIC DNA]</scope>
    <source>
        <strain>ATCC 51142 / BH68</strain>
    </source>
</reference>
<proteinExistence type="inferred from homology"/>
<protein>
    <recommendedName>
        <fullName evidence="1">Proton extrusion protein PxcA</fullName>
    </recommendedName>
</protein>
<dbReference type="EMBL" id="CP000806">
    <property type="protein sequence ID" value="ACB49638.1"/>
    <property type="molecule type" value="Genomic_DNA"/>
</dbReference>
<dbReference type="RefSeq" id="WP_009546780.1">
    <property type="nucleotide sequence ID" value="NC_010546.1"/>
</dbReference>
<dbReference type="STRING" id="43989.cce_0287"/>
<dbReference type="KEGG" id="cyt:cce_0287"/>
<dbReference type="eggNOG" id="ENOG502Z8DN">
    <property type="taxonomic scope" value="Bacteria"/>
</dbReference>
<dbReference type="HOGENOM" id="CLU_690401_0_0_3"/>
<dbReference type="OrthoDB" id="418298at2"/>
<dbReference type="Proteomes" id="UP000001203">
    <property type="component" value="Chromosome circular"/>
</dbReference>
<dbReference type="GO" id="GO:0005886">
    <property type="term" value="C:plasma membrane"/>
    <property type="evidence" value="ECO:0007669"/>
    <property type="project" value="UniProtKB-SubCell"/>
</dbReference>
<dbReference type="GO" id="GO:0015078">
    <property type="term" value="F:proton transmembrane transporter activity"/>
    <property type="evidence" value="ECO:0007669"/>
    <property type="project" value="UniProtKB-UniRule"/>
</dbReference>
<dbReference type="HAMAP" id="MF_01308">
    <property type="entry name" value="CemA_PxcA"/>
    <property type="match status" value="1"/>
</dbReference>
<dbReference type="InterPro" id="IPR004282">
    <property type="entry name" value="CemA"/>
</dbReference>
<dbReference type="NCBIfam" id="NF002703">
    <property type="entry name" value="PRK02507.1-1"/>
    <property type="match status" value="1"/>
</dbReference>
<dbReference type="PANTHER" id="PTHR33650:SF2">
    <property type="entry name" value="CHLOROPLAST ENVELOPE MEMBRANE PROTEIN"/>
    <property type="match status" value="1"/>
</dbReference>
<dbReference type="PANTHER" id="PTHR33650">
    <property type="entry name" value="CHLOROPLAST ENVELOPE MEMBRANE PROTEIN-RELATED"/>
    <property type="match status" value="1"/>
</dbReference>
<dbReference type="Pfam" id="PF03040">
    <property type="entry name" value="CemA"/>
    <property type="match status" value="1"/>
</dbReference>
<evidence type="ECO:0000255" key="1">
    <source>
        <dbReference type="HAMAP-Rule" id="MF_01308"/>
    </source>
</evidence>
<evidence type="ECO:0000256" key="2">
    <source>
        <dbReference type="SAM" id="MobiDB-lite"/>
    </source>
</evidence>
<feature type="chain" id="PRO_1000165470" description="Proton extrusion protein PxcA">
    <location>
        <begin position="1"/>
        <end position="453"/>
    </location>
</feature>
<feature type="transmembrane region" description="Helical" evidence="1">
    <location>
        <begin position="235"/>
        <end position="255"/>
    </location>
</feature>
<feature type="transmembrane region" description="Helical" evidence="1">
    <location>
        <begin position="330"/>
        <end position="350"/>
    </location>
</feature>
<feature type="transmembrane region" description="Helical" evidence="1">
    <location>
        <begin position="377"/>
        <end position="397"/>
    </location>
</feature>
<feature type="transmembrane region" description="Helical" evidence="1">
    <location>
        <begin position="413"/>
        <end position="433"/>
    </location>
</feature>
<feature type="region of interest" description="Disordered" evidence="2">
    <location>
        <begin position="147"/>
        <end position="189"/>
    </location>
</feature>
<feature type="compositionally biased region" description="Polar residues" evidence="2">
    <location>
        <begin position="154"/>
        <end position="163"/>
    </location>
</feature>
<feature type="compositionally biased region" description="Low complexity" evidence="2">
    <location>
        <begin position="164"/>
        <end position="175"/>
    </location>
</feature>
<feature type="compositionally biased region" description="Polar residues" evidence="2">
    <location>
        <begin position="176"/>
        <end position="189"/>
    </location>
</feature>
<keyword id="KW-0997">Cell inner membrane</keyword>
<keyword id="KW-1003">Cell membrane</keyword>
<keyword id="KW-0375">Hydrogen ion transport</keyword>
<keyword id="KW-0406">Ion transport</keyword>
<keyword id="KW-0472">Membrane</keyword>
<keyword id="KW-1185">Reference proteome</keyword>
<keyword id="KW-0812">Transmembrane</keyword>
<keyword id="KW-1133">Transmembrane helix</keyword>
<keyword id="KW-0813">Transport</keyword>
<gene>
    <name evidence="1" type="primary">pxcA</name>
    <name type="ordered locus">cce_0287</name>
</gene>
<organism>
    <name type="scientific">Crocosphaera subtropica (strain ATCC 51142 / BH68)</name>
    <name type="common">Cyanothece sp. (strain ATCC 51142)</name>
    <dbReference type="NCBI Taxonomy" id="43989"/>
    <lineage>
        <taxon>Bacteria</taxon>
        <taxon>Bacillati</taxon>
        <taxon>Cyanobacteriota</taxon>
        <taxon>Cyanophyceae</taxon>
        <taxon>Oscillatoriophycideae</taxon>
        <taxon>Chroococcales</taxon>
        <taxon>Aphanothecaceae</taxon>
        <taxon>Crocosphaera</taxon>
        <taxon>Crocosphaera subtropica</taxon>
    </lineage>
</organism>
<name>PXCA_CROS5</name>
<comment type="function">
    <text evidence="1">Required for H(+) efflux immediately after light irradiation to form a rapid H(+) concentration gradient across the thylakoid membranes. Together with PxcL, contributes to transient H(+) uptake following dark to light transition.</text>
</comment>
<comment type="subcellular location">
    <subcellularLocation>
        <location evidence="1">Cell inner membrane</location>
        <topology evidence="1">Multi-pass membrane protein</topology>
    </subcellularLocation>
</comment>
<comment type="similarity">
    <text evidence="1">Belongs to the CemA family.</text>
</comment>